<keyword id="KW-0460">Magnesium</keyword>
<keyword id="KW-0479">Metal-binding</keyword>
<keyword id="KW-0784">Thiamine biosynthesis</keyword>
<keyword id="KW-0808">Transferase</keyword>
<feature type="chain" id="PRO_1000057643" description="Thiamine-phosphate synthase">
    <location>
        <begin position="1"/>
        <end position="211"/>
    </location>
</feature>
<feature type="binding site" evidence="1">
    <location>
        <begin position="37"/>
        <end position="41"/>
    </location>
    <ligand>
        <name>4-amino-2-methyl-5-(diphosphooxymethyl)pyrimidine</name>
        <dbReference type="ChEBI" id="CHEBI:57841"/>
    </ligand>
</feature>
<feature type="binding site" evidence="1">
    <location>
        <position position="69"/>
    </location>
    <ligand>
        <name>4-amino-2-methyl-5-(diphosphooxymethyl)pyrimidine</name>
        <dbReference type="ChEBI" id="CHEBI:57841"/>
    </ligand>
</feature>
<feature type="binding site" evidence="1">
    <location>
        <position position="70"/>
    </location>
    <ligand>
        <name>Mg(2+)</name>
        <dbReference type="ChEBI" id="CHEBI:18420"/>
    </ligand>
</feature>
<feature type="binding site" evidence="1">
    <location>
        <position position="89"/>
    </location>
    <ligand>
        <name>Mg(2+)</name>
        <dbReference type="ChEBI" id="CHEBI:18420"/>
    </ligand>
</feature>
<feature type="binding site" evidence="1">
    <location>
        <position position="108"/>
    </location>
    <ligand>
        <name>4-amino-2-methyl-5-(diphosphooxymethyl)pyrimidine</name>
        <dbReference type="ChEBI" id="CHEBI:57841"/>
    </ligand>
</feature>
<feature type="binding site" evidence="1">
    <location>
        <begin position="134"/>
        <end position="136"/>
    </location>
    <ligand>
        <name>2-[(2R,5Z)-2-carboxy-4-methylthiazol-5(2H)-ylidene]ethyl phosphate</name>
        <dbReference type="ChEBI" id="CHEBI:62899"/>
    </ligand>
</feature>
<feature type="binding site" evidence="1">
    <location>
        <position position="137"/>
    </location>
    <ligand>
        <name>4-amino-2-methyl-5-(diphosphooxymethyl)pyrimidine</name>
        <dbReference type="ChEBI" id="CHEBI:57841"/>
    </ligand>
</feature>
<feature type="binding site" evidence="1">
    <location>
        <position position="166"/>
    </location>
    <ligand>
        <name>2-[(2R,5Z)-2-carboxy-4-methylthiazol-5(2H)-ylidene]ethyl phosphate</name>
        <dbReference type="ChEBI" id="CHEBI:62899"/>
    </ligand>
</feature>
<feature type="binding site" evidence="1">
    <location>
        <begin position="186"/>
        <end position="187"/>
    </location>
    <ligand>
        <name>2-[(2R,5Z)-2-carboxy-4-methylthiazol-5(2H)-ylidene]ethyl phosphate</name>
        <dbReference type="ChEBI" id="CHEBI:62899"/>
    </ligand>
</feature>
<sequence>MYQPDFPPVPFRLGLYPVVDSVVWIERLLQAGVKTLQLRIKDKCDEDVEPDVANAIKLGRRYGARLFINDYWQLAIQHQAYGVHLGQEDLETTDLSAIRNAGLRLGVSTHDDMEIDVALAARPSYIALGHVFPTQTKQMPSAPQGLEQLTRHIERLADYPTVAIGGISLERVPAVLKTGVGSVAVVSAITQAADWQVATAQLLQLAGAGDE</sequence>
<proteinExistence type="inferred from homology"/>
<accession>A4W5B6</accession>
<name>THIE_ENT38</name>
<protein>
    <recommendedName>
        <fullName evidence="1">Thiamine-phosphate synthase</fullName>
        <shortName evidence="1">TP synthase</shortName>
        <shortName evidence="1">TPS</shortName>
        <ecNumber evidence="1">2.5.1.3</ecNumber>
    </recommendedName>
    <alternativeName>
        <fullName evidence="1">Thiamine-phosphate pyrophosphorylase</fullName>
        <shortName evidence="1">TMP pyrophosphorylase</shortName>
        <shortName evidence="1">TMP-PPase</shortName>
    </alternativeName>
</protein>
<reference key="1">
    <citation type="journal article" date="2010" name="PLoS Genet.">
        <title>Genome sequence of the plant growth promoting endophytic bacterium Enterobacter sp. 638.</title>
        <authorList>
            <person name="Taghavi S."/>
            <person name="van der Lelie D."/>
            <person name="Hoffman A."/>
            <person name="Zhang Y.B."/>
            <person name="Walla M.D."/>
            <person name="Vangronsveld J."/>
            <person name="Newman L."/>
            <person name="Monchy S."/>
        </authorList>
    </citation>
    <scope>NUCLEOTIDE SEQUENCE [LARGE SCALE GENOMIC DNA]</scope>
    <source>
        <strain>638</strain>
    </source>
</reference>
<gene>
    <name evidence="1" type="primary">thiE</name>
    <name type="ordered locus">Ent638_0206</name>
</gene>
<dbReference type="EC" id="2.5.1.3" evidence="1"/>
<dbReference type="EMBL" id="CP000653">
    <property type="protein sequence ID" value="ABP58896.1"/>
    <property type="molecule type" value="Genomic_DNA"/>
</dbReference>
<dbReference type="RefSeq" id="WP_011915470.1">
    <property type="nucleotide sequence ID" value="NC_009436.1"/>
</dbReference>
<dbReference type="SMR" id="A4W5B6"/>
<dbReference type="STRING" id="399742.Ent638_0206"/>
<dbReference type="KEGG" id="ent:Ent638_0206"/>
<dbReference type="eggNOG" id="COG0352">
    <property type="taxonomic scope" value="Bacteria"/>
</dbReference>
<dbReference type="HOGENOM" id="CLU_018272_3_3_6"/>
<dbReference type="OrthoDB" id="9810880at2"/>
<dbReference type="UniPathway" id="UPA00060">
    <property type="reaction ID" value="UER00141"/>
</dbReference>
<dbReference type="Proteomes" id="UP000000230">
    <property type="component" value="Chromosome"/>
</dbReference>
<dbReference type="GO" id="GO:0005737">
    <property type="term" value="C:cytoplasm"/>
    <property type="evidence" value="ECO:0007669"/>
    <property type="project" value="TreeGrafter"/>
</dbReference>
<dbReference type="GO" id="GO:0000287">
    <property type="term" value="F:magnesium ion binding"/>
    <property type="evidence" value="ECO:0007669"/>
    <property type="project" value="UniProtKB-UniRule"/>
</dbReference>
<dbReference type="GO" id="GO:0004789">
    <property type="term" value="F:thiamine-phosphate diphosphorylase activity"/>
    <property type="evidence" value="ECO:0007669"/>
    <property type="project" value="UniProtKB-UniRule"/>
</dbReference>
<dbReference type="GO" id="GO:0009228">
    <property type="term" value="P:thiamine biosynthetic process"/>
    <property type="evidence" value="ECO:0007669"/>
    <property type="project" value="UniProtKB-KW"/>
</dbReference>
<dbReference type="GO" id="GO:0009229">
    <property type="term" value="P:thiamine diphosphate biosynthetic process"/>
    <property type="evidence" value="ECO:0007669"/>
    <property type="project" value="UniProtKB-UniRule"/>
</dbReference>
<dbReference type="CDD" id="cd00564">
    <property type="entry name" value="TMP_TenI"/>
    <property type="match status" value="1"/>
</dbReference>
<dbReference type="FunFam" id="3.20.20.70:FF:000064">
    <property type="entry name" value="Thiamine-phosphate synthase"/>
    <property type="match status" value="1"/>
</dbReference>
<dbReference type="Gene3D" id="3.20.20.70">
    <property type="entry name" value="Aldolase class I"/>
    <property type="match status" value="1"/>
</dbReference>
<dbReference type="HAMAP" id="MF_00097">
    <property type="entry name" value="TMP_synthase"/>
    <property type="match status" value="1"/>
</dbReference>
<dbReference type="InterPro" id="IPR013785">
    <property type="entry name" value="Aldolase_TIM"/>
</dbReference>
<dbReference type="InterPro" id="IPR036206">
    <property type="entry name" value="ThiamineP_synth_sf"/>
</dbReference>
<dbReference type="InterPro" id="IPR022998">
    <property type="entry name" value="ThiamineP_synth_TenI"/>
</dbReference>
<dbReference type="InterPro" id="IPR034291">
    <property type="entry name" value="TMP_synthase"/>
</dbReference>
<dbReference type="NCBIfam" id="NF002904">
    <property type="entry name" value="PRK03512.1"/>
    <property type="match status" value="1"/>
</dbReference>
<dbReference type="NCBIfam" id="TIGR00693">
    <property type="entry name" value="thiE"/>
    <property type="match status" value="1"/>
</dbReference>
<dbReference type="PANTHER" id="PTHR20857">
    <property type="entry name" value="THIAMINE-PHOSPHATE PYROPHOSPHORYLASE"/>
    <property type="match status" value="1"/>
</dbReference>
<dbReference type="PANTHER" id="PTHR20857:SF15">
    <property type="entry name" value="THIAMINE-PHOSPHATE SYNTHASE"/>
    <property type="match status" value="1"/>
</dbReference>
<dbReference type="Pfam" id="PF02581">
    <property type="entry name" value="TMP-TENI"/>
    <property type="match status" value="1"/>
</dbReference>
<dbReference type="SUPFAM" id="SSF51391">
    <property type="entry name" value="Thiamin phosphate synthase"/>
    <property type="match status" value="1"/>
</dbReference>
<organism>
    <name type="scientific">Enterobacter sp. (strain 638)</name>
    <dbReference type="NCBI Taxonomy" id="399742"/>
    <lineage>
        <taxon>Bacteria</taxon>
        <taxon>Pseudomonadati</taxon>
        <taxon>Pseudomonadota</taxon>
        <taxon>Gammaproteobacteria</taxon>
        <taxon>Enterobacterales</taxon>
        <taxon>Enterobacteriaceae</taxon>
        <taxon>Enterobacter</taxon>
    </lineage>
</organism>
<evidence type="ECO:0000255" key="1">
    <source>
        <dbReference type="HAMAP-Rule" id="MF_00097"/>
    </source>
</evidence>
<comment type="function">
    <text evidence="1">Condenses 4-methyl-5-(beta-hydroxyethyl)thiazole monophosphate (THZ-P) and 2-methyl-4-amino-5-hydroxymethyl pyrimidine pyrophosphate (HMP-PP) to form thiamine monophosphate (TMP).</text>
</comment>
<comment type="catalytic activity">
    <reaction evidence="1">
        <text>2-[(2R,5Z)-2-carboxy-4-methylthiazol-5(2H)-ylidene]ethyl phosphate + 4-amino-2-methyl-5-(diphosphooxymethyl)pyrimidine + 2 H(+) = thiamine phosphate + CO2 + diphosphate</text>
        <dbReference type="Rhea" id="RHEA:47844"/>
        <dbReference type="ChEBI" id="CHEBI:15378"/>
        <dbReference type="ChEBI" id="CHEBI:16526"/>
        <dbReference type="ChEBI" id="CHEBI:33019"/>
        <dbReference type="ChEBI" id="CHEBI:37575"/>
        <dbReference type="ChEBI" id="CHEBI:57841"/>
        <dbReference type="ChEBI" id="CHEBI:62899"/>
        <dbReference type="EC" id="2.5.1.3"/>
    </reaction>
</comment>
<comment type="catalytic activity">
    <reaction evidence="1">
        <text>2-(2-carboxy-4-methylthiazol-5-yl)ethyl phosphate + 4-amino-2-methyl-5-(diphosphooxymethyl)pyrimidine + 2 H(+) = thiamine phosphate + CO2 + diphosphate</text>
        <dbReference type="Rhea" id="RHEA:47848"/>
        <dbReference type="ChEBI" id="CHEBI:15378"/>
        <dbReference type="ChEBI" id="CHEBI:16526"/>
        <dbReference type="ChEBI" id="CHEBI:33019"/>
        <dbReference type="ChEBI" id="CHEBI:37575"/>
        <dbReference type="ChEBI" id="CHEBI:57841"/>
        <dbReference type="ChEBI" id="CHEBI:62890"/>
        <dbReference type="EC" id="2.5.1.3"/>
    </reaction>
</comment>
<comment type="catalytic activity">
    <reaction evidence="1">
        <text>4-methyl-5-(2-phosphooxyethyl)-thiazole + 4-amino-2-methyl-5-(diphosphooxymethyl)pyrimidine + H(+) = thiamine phosphate + diphosphate</text>
        <dbReference type="Rhea" id="RHEA:22328"/>
        <dbReference type="ChEBI" id="CHEBI:15378"/>
        <dbReference type="ChEBI" id="CHEBI:33019"/>
        <dbReference type="ChEBI" id="CHEBI:37575"/>
        <dbReference type="ChEBI" id="CHEBI:57841"/>
        <dbReference type="ChEBI" id="CHEBI:58296"/>
        <dbReference type="EC" id="2.5.1.3"/>
    </reaction>
</comment>
<comment type="cofactor">
    <cofactor evidence="1">
        <name>Mg(2+)</name>
        <dbReference type="ChEBI" id="CHEBI:18420"/>
    </cofactor>
    <text evidence="1">Binds 1 Mg(2+) ion per subunit.</text>
</comment>
<comment type="pathway">
    <text evidence="1">Cofactor biosynthesis; thiamine diphosphate biosynthesis; thiamine phosphate from 4-amino-2-methyl-5-diphosphomethylpyrimidine and 4-methyl-5-(2-phosphoethyl)-thiazole: step 1/1.</text>
</comment>
<comment type="similarity">
    <text evidence="1">Belongs to the thiamine-phosphate synthase family.</text>
</comment>